<accession>P48114</accession>
<sequence length="70" mass="8047">MVQRGSKVRILRKESYWYQEIGTVASIDQSGIKYPVIVRFEKVNYSNVNSNNFSLDEVVEVEPPPSKKKA</sequence>
<protein>
    <recommendedName>
        <fullName>Photosystem I reaction center subunit IV</fullName>
        <shortName>PSI-E</shortName>
    </recommendedName>
</protein>
<proteinExistence type="evidence at protein level"/>
<name>PSAE_CYAPA</name>
<reference key="1">
    <citation type="journal article" date="1995" name="Plant Mol. Biol. Rep.">
        <title>Nucleotide sequence of the cyanelle DNA from Cyanophora paradoxa.</title>
        <authorList>
            <person name="Stirewalt V.L."/>
            <person name="Michalowski C.B."/>
            <person name="Loeffelhardt W."/>
            <person name="Bohnert H.J."/>
            <person name="Bryant D.A."/>
        </authorList>
    </citation>
    <scope>NUCLEOTIDE SEQUENCE [LARGE SCALE GENOMIC DNA]</scope>
    <source>
        <strain>UTEX LB 555 / Pringsheim</strain>
    </source>
</reference>
<reference key="2">
    <citation type="book" date="1997" name="Eukaryotism and symbiosis">
        <title>The complete sequence of the cyanelle genome of Cyanophora paradoxa: the genetic complexity of a primitive plastid.</title>
        <editorList>
            <person name="Schenk H.E.A."/>
            <person name="Herrmann R."/>
            <person name="Jeon K.W."/>
            <person name="Mueller N.E."/>
            <person name="Schwemmler W."/>
        </editorList>
        <authorList>
            <person name="Loeffelhardt W."/>
            <person name="Stirewalt V.L."/>
            <person name="Michalowski C.B."/>
            <person name="Annarella M."/>
            <person name="Farley J.Y."/>
            <person name="Schluchter W.M."/>
            <person name="Chung S."/>
            <person name="Newmann-Spallart C."/>
            <person name="Steiner J.M."/>
            <person name="Jakowitsch J."/>
            <person name="Bohnert H.J."/>
            <person name="Bryant D.A."/>
        </authorList>
    </citation>
    <scope>NUCLEOTIDE SEQUENCE [LARGE SCALE GENOMIC DNA]</scope>
    <source>
        <strain>UTEX LB 555 / Pringsheim</strain>
    </source>
</reference>
<gene>
    <name type="primary">psaE</name>
</gene>
<organism>
    <name type="scientific">Cyanophora paradoxa</name>
    <dbReference type="NCBI Taxonomy" id="2762"/>
    <lineage>
        <taxon>Eukaryota</taxon>
        <taxon>Glaucocystophyceae</taxon>
        <taxon>Cyanophoraceae</taxon>
        <taxon>Cyanophora</taxon>
    </lineage>
</organism>
<feature type="chain" id="PRO_0000204394" description="Photosystem I reaction center subunit IV">
    <location>
        <begin position="1"/>
        <end position="70"/>
    </location>
</feature>
<feature type="strand" evidence="3">
    <location>
        <begin position="7"/>
        <end position="10"/>
    </location>
</feature>
<feature type="strand" evidence="3">
    <location>
        <begin position="21"/>
        <end position="27"/>
    </location>
</feature>
<feature type="strand" evidence="3">
    <location>
        <begin position="29"/>
        <end position="31"/>
    </location>
</feature>
<feature type="strand" evidence="3">
    <location>
        <begin position="36"/>
        <end position="39"/>
    </location>
</feature>
<feature type="strand" evidence="3">
    <location>
        <begin position="50"/>
        <end position="53"/>
    </location>
</feature>
<feature type="helix" evidence="3">
    <location>
        <begin position="55"/>
        <end position="57"/>
    </location>
</feature>
<keyword id="KW-0002">3D-structure</keyword>
<keyword id="KW-0194">Cyanelle</keyword>
<keyword id="KW-0472">Membrane</keyword>
<keyword id="KW-0602">Photosynthesis</keyword>
<keyword id="KW-0603">Photosystem I</keyword>
<keyword id="KW-0934">Plastid</keyword>
<keyword id="KW-0793">Thylakoid</keyword>
<dbReference type="EMBL" id="U30821">
    <property type="protein sequence ID" value="AAA81265.1"/>
    <property type="molecule type" value="Genomic_DNA"/>
</dbReference>
<dbReference type="PIR" id="T06922">
    <property type="entry name" value="T06922"/>
</dbReference>
<dbReference type="RefSeq" id="NP_043234.1">
    <property type="nucleotide sequence ID" value="NC_001675.1"/>
</dbReference>
<dbReference type="PDB" id="7DR0">
    <property type="method" value="EM"/>
    <property type="resolution" value="3.30 A"/>
    <property type="chains" value="E=1-70"/>
</dbReference>
<dbReference type="PDB" id="7DR1">
    <property type="method" value="EM"/>
    <property type="resolution" value="3.20 A"/>
    <property type="chains" value="E=1-70"/>
</dbReference>
<dbReference type="PDB" id="7DR2">
    <property type="method" value="EM"/>
    <property type="resolution" value="3.80 A"/>
    <property type="chains" value="aE/bE/cE/dE=1-70"/>
</dbReference>
<dbReference type="PDBsum" id="7DR0"/>
<dbReference type="PDBsum" id="7DR1"/>
<dbReference type="PDBsum" id="7DR2"/>
<dbReference type="EMDB" id="EMD-30820"/>
<dbReference type="EMDB" id="EMD-30821"/>
<dbReference type="EMDB" id="EMD-30823"/>
<dbReference type="SMR" id="P48114"/>
<dbReference type="GeneID" id="801539"/>
<dbReference type="GO" id="GO:0033115">
    <property type="term" value="C:cyanelle thylakoid membrane"/>
    <property type="evidence" value="ECO:0007669"/>
    <property type="project" value="UniProtKB-SubCell"/>
</dbReference>
<dbReference type="GO" id="GO:0009538">
    <property type="term" value="C:photosystem I reaction center"/>
    <property type="evidence" value="ECO:0007669"/>
    <property type="project" value="InterPro"/>
</dbReference>
<dbReference type="GO" id="GO:0015979">
    <property type="term" value="P:photosynthesis"/>
    <property type="evidence" value="ECO:0007669"/>
    <property type="project" value="UniProtKB-UniRule"/>
</dbReference>
<dbReference type="Gene3D" id="2.30.30.50">
    <property type="match status" value="1"/>
</dbReference>
<dbReference type="HAMAP" id="MF_00613">
    <property type="entry name" value="PSI_PsaE"/>
    <property type="match status" value="1"/>
</dbReference>
<dbReference type="InterPro" id="IPR008990">
    <property type="entry name" value="Elect_transpt_acc-like_dom_sf"/>
</dbReference>
<dbReference type="InterPro" id="IPR003375">
    <property type="entry name" value="PSI_PsaE"/>
</dbReference>
<dbReference type="NCBIfam" id="NF002745">
    <property type="entry name" value="PRK02749.1"/>
    <property type="match status" value="1"/>
</dbReference>
<dbReference type="PANTHER" id="PTHR34549">
    <property type="entry name" value="PHOTOSYSTEM I REACTION CENTER SUBUNIT IV A, CHLOROPLASTIC-RELATED"/>
    <property type="match status" value="1"/>
</dbReference>
<dbReference type="PANTHER" id="PTHR34549:SF2">
    <property type="entry name" value="PHOTOSYSTEM I SUBUNIT IV"/>
    <property type="match status" value="1"/>
</dbReference>
<dbReference type="Pfam" id="PF02427">
    <property type="entry name" value="PSI_PsaE"/>
    <property type="match status" value="1"/>
</dbReference>
<dbReference type="SUPFAM" id="SSF50090">
    <property type="entry name" value="Electron transport accessory proteins"/>
    <property type="match status" value="1"/>
</dbReference>
<evidence type="ECO:0000250" key="1"/>
<evidence type="ECO:0000305" key="2"/>
<evidence type="ECO:0007829" key="3">
    <source>
        <dbReference type="PDB" id="7DR1"/>
    </source>
</evidence>
<comment type="function">
    <text evidence="1">Stabilizes the interaction between PsaC and the PSI core, assists the docking of the ferredoxin to PSI and interacts with ferredoxin-NADP oxidoreductase.</text>
</comment>
<comment type="subcellular location">
    <subcellularLocation>
        <location evidence="1">Plastid</location>
        <location evidence="1">Cyanelle thylakoid membrane</location>
        <topology evidence="1">Peripheral membrane protein</topology>
        <orientation evidence="1">Stromal side</orientation>
    </subcellularLocation>
</comment>
<comment type="similarity">
    <text evidence="2">Belongs to the PsaE family.</text>
</comment>
<geneLocation type="cyanelle"/>